<name>TARI_STRP4</name>
<protein>
    <recommendedName>
        <fullName evidence="1">Ribitol-5-phosphate cytidylyltransferase</fullName>
        <ecNumber evidence="1">2.7.7.40</ecNumber>
    </recommendedName>
</protein>
<proteinExistence type="inferred from homology"/>
<dbReference type="EC" id="2.7.7.40" evidence="1"/>
<dbReference type="EMBL" id="CP001015">
    <property type="protein sequence ID" value="ACF54889.1"/>
    <property type="molecule type" value="Genomic_DNA"/>
</dbReference>
<dbReference type="SMR" id="B5E508"/>
<dbReference type="KEGG" id="spx:SPG_1165"/>
<dbReference type="HOGENOM" id="CLU_061281_2_3_9"/>
<dbReference type="UniPathway" id="UPA00790"/>
<dbReference type="GO" id="GO:0050518">
    <property type="term" value="F:2-C-methyl-D-erythritol 4-phosphate cytidylyltransferase activity"/>
    <property type="evidence" value="ECO:0007669"/>
    <property type="project" value="TreeGrafter"/>
</dbReference>
<dbReference type="GO" id="GO:0047349">
    <property type="term" value="F:D-ribitol-5-phosphate cytidylyltransferase activity"/>
    <property type="evidence" value="ECO:0007669"/>
    <property type="project" value="UniProtKB-UniRule"/>
</dbReference>
<dbReference type="GO" id="GO:0071555">
    <property type="term" value="P:cell wall organization"/>
    <property type="evidence" value="ECO:0007669"/>
    <property type="project" value="UniProtKB-KW"/>
</dbReference>
<dbReference type="GO" id="GO:0008299">
    <property type="term" value="P:isoprenoid biosynthetic process"/>
    <property type="evidence" value="ECO:0007669"/>
    <property type="project" value="InterPro"/>
</dbReference>
<dbReference type="GO" id="GO:1902012">
    <property type="term" value="P:poly(ribitol phosphate) teichoic acid biosynthetic process"/>
    <property type="evidence" value="ECO:0007669"/>
    <property type="project" value="UniProtKB-UniRule"/>
</dbReference>
<dbReference type="CDD" id="cd02516">
    <property type="entry name" value="CDP-ME_synthetase"/>
    <property type="match status" value="1"/>
</dbReference>
<dbReference type="FunFam" id="3.90.550.10:FF:000003">
    <property type="entry name" value="2-C-methyl-D-erythritol 4-phosphate cytidylyltransferase"/>
    <property type="match status" value="1"/>
</dbReference>
<dbReference type="Gene3D" id="3.90.550.10">
    <property type="entry name" value="Spore Coat Polysaccharide Biosynthesis Protein SpsA, Chain A"/>
    <property type="match status" value="1"/>
</dbReference>
<dbReference type="HAMAP" id="MF_02068">
    <property type="entry name" value="TarI"/>
    <property type="match status" value="1"/>
</dbReference>
<dbReference type="InterPro" id="IPR034683">
    <property type="entry name" value="IspD/TarI"/>
</dbReference>
<dbReference type="InterPro" id="IPR050088">
    <property type="entry name" value="IspD/TarI_cytidylyltransf_bact"/>
</dbReference>
<dbReference type="InterPro" id="IPR018294">
    <property type="entry name" value="ISPD_synthase_CS"/>
</dbReference>
<dbReference type="InterPro" id="IPR029044">
    <property type="entry name" value="Nucleotide-diphossugar_trans"/>
</dbReference>
<dbReference type="InterPro" id="IPR034709">
    <property type="entry name" value="TarI"/>
</dbReference>
<dbReference type="NCBIfam" id="NF001183">
    <property type="entry name" value="PRK00155.1-3"/>
    <property type="match status" value="1"/>
</dbReference>
<dbReference type="PANTHER" id="PTHR32125">
    <property type="entry name" value="2-C-METHYL-D-ERYTHRITOL 4-PHOSPHATE CYTIDYLYLTRANSFERASE, CHLOROPLASTIC"/>
    <property type="match status" value="1"/>
</dbReference>
<dbReference type="PANTHER" id="PTHR32125:SF8">
    <property type="entry name" value="RIBITOL-5-PHOSPHATE CYTIDYLYLTRANSFERASE"/>
    <property type="match status" value="1"/>
</dbReference>
<dbReference type="Pfam" id="PF01128">
    <property type="entry name" value="IspD"/>
    <property type="match status" value="1"/>
</dbReference>
<dbReference type="SUPFAM" id="SSF53448">
    <property type="entry name" value="Nucleotide-diphospho-sugar transferases"/>
    <property type="match status" value="1"/>
</dbReference>
<dbReference type="PROSITE" id="PS01295">
    <property type="entry name" value="ISPD"/>
    <property type="match status" value="1"/>
</dbReference>
<reference key="1">
    <citation type="journal article" date="2001" name="Microb. Drug Resist.">
        <title>Annotated draft genomic sequence from a Streptococcus pneumoniae type 19F clinical isolate.</title>
        <authorList>
            <person name="Dopazo J."/>
            <person name="Mendoza A."/>
            <person name="Herrero J."/>
            <person name="Caldara F."/>
            <person name="Humbert Y."/>
            <person name="Friedli L."/>
            <person name="Guerrier M."/>
            <person name="Grand-Schenk E."/>
            <person name="Gandin C."/>
            <person name="de Francesco M."/>
            <person name="Polissi A."/>
            <person name="Buell G."/>
            <person name="Feger G."/>
            <person name="Garcia E."/>
            <person name="Peitsch M."/>
            <person name="Garcia-Bustos J.F."/>
        </authorList>
    </citation>
    <scope>NUCLEOTIDE SEQUENCE [LARGE SCALE GENOMIC DNA]</scope>
    <source>
        <strain>G54</strain>
    </source>
</reference>
<reference key="2">
    <citation type="submission" date="2008-03" db="EMBL/GenBank/DDBJ databases">
        <title>Pneumococcal beta glucoside metabolism investigated by whole genome comparison.</title>
        <authorList>
            <person name="Mulas L."/>
            <person name="Trappetti C."/>
            <person name="Hakenbeck R."/>
            <person name="Iannelli F."/>
            <person name="Pozzi G."/>
            <person name="Davidsen T.M."/>
            <person name="Tettelin H."/>
            <person name="Oggioni M."/>
        </authorList>
    </citation>
    <scope>NUCLEOTIDE SEQUENCE [LARGE SCALE GENOMIC DNA]</scope>
    <source>
        <strain>G54</strain>
    </source>
</reference>
<organism>
    <name type="scientific">Streptococcus pneumoniae serotype 19F (strain G54)</name>
    <dbReference type="NCBI Taxonomy" id="512566"/>
    <lineage>
        <taxon>Bacteria</taxon>
        <taxon>Bacillati</taxon>
        <taxon>Bacillota</taxon>
        <taxon>Bacilli</taxon>
        <taxon>Lactobacillales</taxon>
        <taxon>Streptococcaceae</taxon>
        <taxon>Streptococcus</taxon>
    </lineage>
</organism>
<evidence type="ECO:0000255" key="1">
    <source>
        <dbReference type="HAMAP-Rule" id="MF_02068"/>
    </source>
</evidence>
<accession>B5E508</accession>
<keyword id="KW-0961">Cell wall biogenesis/degradation</keyword>
<keyword id="KW-0548">Nucleotidyltransferase</keyword>
<keyword id="KW-0777">Teichoic acid biosynthesis</keyword>
<keyword id="KW-0808">Transferase</keyword>
<comment type="function">
    <text evidence="1">Catalyzes the transfer of the cytidylyl group of CTP to D-ribitol 5-phosphate.</text>
</comment>
<comment type="catalytic activity">
    <reaction evidence="1">
        <text>D-ribitol 5-phosphate + CTP + H(+) = CDP-L-ribitol + diphosphate</text>
        <dbReference type="Rhea" id="RHEA:12456"/>
        <dbReference type="ChEBI" id="CHEBI:15378"/>
        <dbReference type="ChEBI" id="CHEBI:33019"/>
        <dbReference type="ChEBI" id="CHEBI:37563"/>
        <dbReference type="ChEBI" id="CHEBI:57608"/>
        <dbReference type="ChEBI" id="CHEBI:57695"/>
        <dbReference type="EC" id="2.7.7.40"/>
    </reaction>
</comment>
<comment type="pathway">
    <text evidence="1">Cell wall biogenesis; poly(ribitol phosphate) teichoic acid biosynthesis.</text>
</comment>
<comment type="similarity">
    <text evidence="1">Belongs to the IspD/TarI cytidylyltransferase family. TarI subfamily.</text>
</comment>
<gene>
    <name evidence="1" type="primary">tarI</name>
    <name type="ordered locus">SPG_1165</name>
</gene>
<sequence>MIYAGILAGGTGTRMGISNLPKQFLELGDRPILIHTIEKFVLEPSIEKIVVGVHGDWVSHAEDLVDKYLPLYKERIIITKGGADRNTSIKKIIEAIDAYRPLTPEDIVVTHDSVRPFITLRMIQDNIQLAQNHDAVDTVVEAVDTIVESTNGQFITDIPNRAHLYQGQTPQTFRCKDFMDLYGSLSDEEKEILTDACKIFVIKGKDVALAKGEYSNLKITTVTDLKIAKSMIEKD</sequence>
<feature type="chain" id="PRO_1000094353" description="Ribitol-5-phosphate cytidylyltransferase">
    <location>
        <begin position="1"/>
        <end position="235"/>
    </location>
</feature>
<feature type="binding site" evidence="1">
    <location>
        <begin position="7"/>
        <end position="10"/>
    </location>
    <ligand>
        <name>CTP</name>
        <dbReference type="ChEBI" id="CHEBI:37563"/>
    </ligand>
</feature>
<feature type="binding site" evidence="1">
    <location>
        <begin position="82"/>
        <end position="88"/>
    </location>
    <ligand>
        <name>CTP</name>
        <dbReference type="ChEBI" id="CHEBI:37563"/>
    </ligand>
</feature>
<feature type="binding site" evidence="1">
    <location>
        <position position="113"/>
    </location>
    <ligand>
        <name>CTP</name>
        <dbReference type="ChEBI" id="CHEBI:37563"/>
    </ligand>
</feature>
<feature type="site" description="Transition state stabilizer" evidence="1">
    <location>
        <position position="14"/>
    </location>
</feature>
<feature type="site" description="Transition state stabilizer" evidence="1">
    <location>
        <position position="22"/>
    </location>
</feature>
<feature type="site" description="Positions ribitol 5-phosphate for the nucleophilic attack" evidence="1">
    <location>
        <position position="161"/>
    </location>
</feature>
<feature type="site" description="Positions ribitol 5-phosphate for the nucleophilic attack" evidence="1">
    <location>
        <position position="218"/>
    </location>
</feature>